<comment type="function">
    <text evidence="2">Calcium-binding protein that interacts with rotavirus cell receptors once the initial attachment by VP4 has been achieved. Rotavirus attachment and entry into the host cell probably involves multiple sequential contacts between the outer capsid proteins VP4 and VP7, and the cell receptors. Following entry into the host cell, low intracellular or intravesicular Ca(2+) concentration probably causes the calcium-stabilized VP7 trimers to dissociate from the virion. This step is probably necessary for the membrane-disrupting entry step and the release of VP4, which is locked onto the virion by VP7.</text>
</comment>
<comment type="subunit">
    <text evidence="2">Homotrimer; disulfide-linked. 2 Ca(2+) ions bound at each subunit interface in the trimer hold the trimer together. Interacts with the intermediate capsid protein VP6. Interacts with the outer capsid protein VP5*.</text>
</comment>
<comment type="subcellular location">
    <subcellularLocation>
        <location evidence="2">Virion</location>
    </subcellularLocation>
    <subcellularLocation>
        <location evidence="2">Host endoplasmic reticulum lumen</location>
    </subcellularLocation>
    <text evidence="2">The outer layer contains 780 copies of VP7, grouped as 260 trimers. Immature double-layered particles assembled in the cytoplasm bud across the membrane of the endoplasmic reticulum, acquiring during this process a transient lipid membrane that is modified with the ER resident viral glycoproteins NSP4 and VP7; these enveloped particles also contain VP4. As the particles move towards the interior of the ER cisternae, the transient lipid membrane and the non-structural protein NSP4 are lost, while the virus surface proteins VP4 and VP7 rearrange to form the outermost virus protein layer, yielding mature infectious triple-layered particles.</text>
</comment>
<comment type="alternative products">
    <event type="alternative initiation"/>
    <isoform>
        <id>P21285-1</id>
        <name>1</name>
        <sequence type="displayed"/>
    </isoform>
    <isoform>
        <id>P21285-2</id>
        <name>2</name>
        <sequence type="described" ref="VSP_038626"/>
    </isoform>
</comment>
<comment type="PTM">
    <text evidence="2">N-glycosylated.</text>
</comment>
<comment type="PTM">
    <text evidence="2">The N-terminus is blocked possibly by pyroglutamic acid.</text>
</comment>
<comment type="miscellaneous">
    <text evidence="2">Some rotavirus strains are neuraminidase-sensitive and require sialic acid to attach to the cell surface. Some rotavirus strains are integrin-dependent. Some rotavirus strains depend on ganglioside for their entry into the host cell. Hsp70 also seems to be involved in the entry of some strains.</text>
</comment>
<comment type="miscellaneous">
    <text evidence="2">In group A rotaviruses, VP7 defines the G serotype.</text>
</comment>
<comment type="miscellaneous">
    <molecule>Isoform 2</molecule>
    <text evidence="3">Produced by alternative initiation at Met-30 of isoform 1.</text>
</comment>
<comment type="similarity">
    <text evidence="2">Belongs to the rotavirus VP7 family.</text>
</comment>
<proteinExistence type="inferred from homology"/>
<organismHost>
    <name type="scientific">Homo sapiens</name>
    <name type="common">Human</name>
    <dbReference type="NCBI Taxonomy" id="9606"/>
</organismHost>
<dbReference type="EMBL" id="M58290">
    <property type="protein sequence ID" value="AAA47341.1"/>
    <property type="molecule type" value="Genomic_RNA"/>
</dbReference>
<dbReference type="EMBL" id="EF672595">
    <property type="protein sequence ID" value="ABV53272.1"/>
    <property type="molecule type" value="Genomic_RNA"/>
</dbReference>
<dbReference type="PIR" id="B36410">
    <property type="entry name" value="VGXRWL"/>
</dbReference>
<dbReference type="SMR" id="P21285"/>
<dbReference type="Proteomes" id="UP000001459">
    <property type="component" value="Genome"/>
</dbReference>
<dbReference type="GO" id="GO:0044166">
    <property type="term" value="C:host cell endoplasmic reticulum lumen"/>
    <property type="evidence" value="ECO:0007669"/>
    <property type="project" value="UniProtKB-SubCell"/>
</dbReference>
<dbReference type="GO" id="GO:0039621">
    <property type="term" value="C:T=13 icosahedral viral capsid"/>
    <property type="evidence" value="ECO:0007669"/>
    <property type="project" value="UniProtKB-UniRule"/>
</dbReference>
<dbReference type="GO" id="GO:0039624">
    <property type="term" value="C:viral outer capsid"/>
    <property type="evidence" value="ECO:0007669"/>
    <property type="project" value="UniProtKB-UniRule"/>
</dbReference>
<dbReference type="GO" id="GO:0046872">
    <property type="term" value="F:metal ion binding"/>
    <property type="evidence" value="ECO:0007669"/>
    <property type="project" value="UniProtKB-KW"/>
</dbReference>
<dbReference type="Gene3D" id="3.40.50.11130">
    <property type="entry name" value="Glycoprotein VP7, domain 1"/>
    <property type="match status" value="1"/>
</dbReference>
<dbReference type="Gene3D" id="2.60.120.800">
    <property type="entry name" value="Rotavirus outer-layer protein VP7, domain 2"/>
    <property type="match status" value="1"/>
</dbReference>
<dbReference type="HAMAP" id="MF_04130">
    <property type="entry name" value="Rota_VP7"/>
    <property type="match status" value="1"/>
</dbReference>
<dbReference type="HAMAP" id="MF_04131">
    <property type="entry name" value="Rota_VP7_A"/>
    <property type="match status" value="1"/>
</dbReference>
<dbReference type="InterPro" id="IPR001963">
    <property type="entry name" value="VP7"/>
</dbReference>
<dbReference type="InterPro" id="IPR042207">
    <property type="entry name" value="VP7_1"/>
</dbReference>
<dbReference type="InterPro" id="IPR042210">
    <property type="entry name" value="VP7_2"/>
</dbReference>
<dbReference type="Pfam" id="PF00434">
    <property type="entry name" value="VP7"/>
    <property type="match status" value="1"/>
</dbReference>
<organism>
    <name type="scientific">Rotavirus A (strain RVA/Human/Philippines/L26/1987/G12P1B[4])</name>
    <name type="common">RV-A</name>
    <dbReference type="NCBI Taxonomy" id="10953"/>
    <lineage>
        <taxon>Viruses</taxon>
        <taxon>Riboviria</taxon>
        <taxon>Orthornavirae</taxon>
        <taxon>Duplornaviricota</taxon>
        <taxon>Resentoviricetes</taxon>
        <taxon>Reovirales</taxon>
        <taxon>Sedoreoviridae</taxon>
        <taxon>Rotavirus</taxon>
        <taxon>Rotavirus A</taxon>
    </lineage>
</organism>
<accession>P21285</accession>
<accession>B3SRU7</accession>
<name>VP7_ROTHL</name>
<evidence type="ECO:0000255" key="1"/>
<evidence type="ECO:0000255" key="2">
    <source>
        <dbReference type="HAMAP-Rule" id="MF_04131"/>
    </source>
</evidence>
<evidence type="ECO:0000305" key="3"/>
<feature type="signal peptide" evidence="2">
    <location>
        <begin position="1"/>
        <end position="50"/>
    </location>
</feature>
<feature type="chain" id="PRO_0000149599" description="Outer capsid glycoprotein VP7" evidence="2">
    <location>
        <begin position="51"/>
        <end position="326"/>
    </location>
</feature>
<feature type="region of interest" description="CNP motif; interaction with ITGAV/ITGB3" evidence="2">
    <location>
        <begin position="165"/>
        <end position="167"/>
    </location>
</feature>
<feature type="region of interest" description="GPR motif; interaction with ITGAX/ITGB2" evidence="2">
    <location>
        <begin position="253"/>
        <end position="255"/>
    </location>
</feature>
<feature type="binding site" evidence="2">
    <location>
        <position position="95"/>
    </location>
    <ligand>
        <name>Ca(2+)</name>
        <dbReference type="ChEBI" id="CHEBI:29108"/>
        <label>1</label>
    </ligand>
</feature>
<feature type="binding site" evidence="2">
    <location>
        <position position="177"/>
    </location>
    <ligand>
        <name>Ca(2+)</name>
        <dbReference type="ChEBI" id="CHEBI:29108"/>
        <label>2</label>
    </ligand>
</feature>
<feature type="binding site" evidence="2">
    <location>
        <position position="206"/>
    </location>
    <ligand>
        <name>Ca(2+)</name>
        <dbReference type="ChEBI" id="CHEBI:29108"/>
        <label>1</label>
    </ligand>
</feature>
<feature type="binding site" evidence="2">
    <location>
        <position position="214"/>
    </location>
    <ligand>
        <name>Ca(2+)</name>
        <dbReference type="ChEBI" id="CHEBI:29108"/>
        <label>1</label>
    </ligand>
</feature>
<feature type="binding site" evidence="2">
    <location>
        <position position="216"/>
    </location>
    <ligand>
        <name>Ca(2+)</name>
        <dbReference type="ChEBI" id="CHEBI:29108"/>
        <label>1</label>
    </ligand>
</feature>
<feature type="binding site" evidence="2">
    <location>
        <position position="228"/>
    </location>
    <ligand>
        <name>Ca(2+)</name>
        <dbReference type="ChEBI" id="CHEBI:29108"/>
        <label>2</label>
    </ligand>
</feature>
<feature type="binding site" evidence="2">
    <location>
        <position position="229"/>
    </location>
    <ligand>
        <name>Ca(2+)</name>
        <dbReference type="ChEBI" id="CHEBI:29108"/>
        <label>2</label>
    </ligand>
</feature>
<feature type="binding site" evidence="2">
    <location>
        <position position="231"/>
    </location>
    <ligand>
        <name>Ca(2+)</name>
        <dbReference type="ChEBI" id="CHEBI:29108"/>
        <label>2</label>
    </ligand>
</feature>
<feature type="binding site" evidence="2">
    <location>
        <position position="301"/>
    </location>
    <ligand>
        <name>Ca(2+)</name>
        <dbReference type="ChEBI" id="CHEBI:29108"/>
        <label>2</label>
    </ligand>
</feature>
<feature type="glycosylation site" description="N-linked (GlcNAc...) asparagine; by host" evidence="1">
    <location>
        <position position="69"/>
    </location>
</feature>
<feature type="glycosylation site" description="N-linked (GlcNAc...) asparagine; by host" evidence="1">
    <location>
        <position position="238"/>
    </location>
</feature>
<feature type="disulfide bond" evidence="2">
    <location>
        <begin position="82"/>
        <end position="135"/>
    </location>
</feature>
<feature type="disulfide bond" evidence="2">
    <location>
        <begin position="165"/>
        <end position="249"/>
    </location>
</feature>
<feature type="disulfide bond" evidence="2">
    <location>
        <begin position="191"/>
        <end position="244"/>
    </location>
</feature>
<feature type="disulfide bond" evidence="2">
    <location>
        <begin position="196"/>
        <end position="207"/>
    </location>
</feature>
<feature type="splice variant" id="VSP_038626" description="In isoform 2." evidence="3">
    <location>
        <begin position="1"/>
        <end position="29"/>
    </location>
</feature>
<feature type="sequence conflict" description="In Ref. 2; ABV53272." evidence="3" ref="2">
    <original>I</original>
    <variation>F</variation>
    <location>
        <position position="12"/>
    </location>
</feature>
<reference key="1">
    <citation type="journal article" date="1990" name="J. Virol.">
        <title>Nucleotide sequence of VP4 and VP7 genes of human rotaviruses with subgroup I specificity and long RNA pattern: implication for new G serotype specificity.</title>
        <authorList>
            <person name="Taniguchi K."/>
            <person name="Urasawa T."/>
            <person name="Kobayashi N."/>
            <person name="Gorziglia M."/>
            <person name="Urasawa S."/>
        </authorList>
    </citation>
    <scope>NUCLEOTIDE SEQUENCE [GENOMIC RNA]</scope>
</reference>
<reference key="2">
    <citation type="journal article" date="2008" name="J. Virol.">
        <title>Group A human rotavirus genomics: evidence that gene constellations are influenced by viral protein interactions.</title>
        <authorList>
            <person name="Heiman E.M."/>
            <person name="McDonald S.M."/>
            <person name="Barro M."/>
            <person name="Taraporewala Z.F."/>
            <person name="Bar-Magen T."/>
            <person name="Patton J.T."/>
        </authorList>
    </citation>
    <scope>NUCLEOTIDE SEQUENCE [GENOMIC RNA]</scope>
</reference>
<protein>
    <recommendedName>
        <fullName evidence="2">Outer capsid glycoprotein VP7</fullName>
    </recommendedName>
</protein>
<sequence length="326" mass="37176">MYGIEYTTILTILISIVLLNYILKSITSMMDFIIYRFLLVFVIVLPFIKAQNYGINLPITGSMDTAYVNSTQQESFMTSTLCLYYPNSVTTEITDPDWTHTLSQLFLTKGWPTNSVYFKSYADIASFSVNPQLYCDYNIVLVQYQNSLALDVSELADLILNEWLCNPMDVTLYYYQQTDEANKWISMGDSCTVKVCPLNMQTLGIGCTTTDVATFEEVANAEKLVITDVVDGVNHKINITLNTCTIQNCKKLGPRENVAIIQVGGSDIIDITADPTTIPQTERIMRINWKKWWQVFYTVVDYINQIVQVMSKRSRSLNSAAFYYRI</sequence>
<keyword id="KW-0024">Alternative initiation</keyword>
<keyword id="KW-0106">Calcium</keyword>
<keyword id="KW-0167">Capsid protein</keyword>
<keyword id="KW-1015">Disulfide bond</keyword>
<keyword id="KW-0325">Glycoprotein</keyword>
<keyword id="KW-1038">Host endoplasmic reticulum</keyword>
<keyword id="KW-0945">Host-virus interaction</keyword>
<keyword id="KW-0479">Metal-binding</keyword>
<keyword id="KW-1152">Outer capsid protein</keyword>
<keyword id="KW-0732">Signal</keyword>
<keyword id="KW-1146">T=13 icosahedral capsid protein</keyword>
<keyword id="KW-0946">Virion</keyword>